<comment type="function">
    <text evidence="1">Part of an ABC transporter complex involved in carbohydrate import. Could be involved in ribose, galactose and/or methyl galactoside import. Responsible for energy coupling to the transport system.</text>
</comment>
<comment type="catalytic activity">
    <reaction evidence="1">
        <text>D-ribose(out) + ATP + H2O = D-ribose(in) + ADP + phosphate + H(+)</text>
        <dbReference type="Rhea" id="RHEA:29903"/>
        <dbReference type="ChEBI" id="CHEBI:15377"/>
        <dbReference type="ChEBI" id="CHEBI:15378"/>
        <dbReference type="ChEBI" id="CHEBI:30616"/>
        <dbReference type="ChEBI" id="CHEBI:43474"/>
        <dbReference type="ChEBI" id="CHEBI:47013"/>
        <dbReference type="ChEBI" id="CHEBI:456216"/>
        <dbReference type="EC" id="7.5.2.7"/>
    </reaction>
</comment>
<comment type="catalytic activity">
    <reaction evidence="1">
        <text>D-galactose(out) + ATP + H2O = D-galactose(in) + ADP + phosphate + H(+)</text>
        <dbReference type="Rhea" id="RHEA:60156"/>
        <dbReference type="ChEBI" id="CHEBI:4139"/>
        <dbReference type="ChEBI" id="CHEBI:15377"/>
        <dbReference type="ChEBI" id="CHEBI:15378"/>
        <dbReference type="ChEBI" id="CHEBI:30616"/>
        <dbReference type="ChEBI" id="CHEBI:43474"/>
        <dbReference type="ChEBI" id="CHEBI:456216"/>
        <dbReference type="EC" id="7.5.2.11"/>
    </reaction>
</comment>
<comment type="subcellular location">
    <subcellularLocation>
        <location evidence="1">Cell inner membrane</location>
        <topology evidence="1">Peripheral membrane protein</topology>
    </subcellularLocation>
</comment>
<comment type="similarity">
    <text evidence="1">Belongs to the ABC transporter superfamily. Carbohydrate importer 2 (CUT2) (TC 3.A.1.2) family.</text>
</comment>
<reference key="1">
    <citation type="submission" date="2006-08" db="EMBL/GenBank/DDBJ databases">
        <title>Complete sequence of chromosome 3 of Burkholderia cenocepacia HI2424.</title>
        <authorList>
            <person name="Copeland A."/>
            <person name="Lucas S."/>
            <person name="Lapidus A."/>
            <person name="Barry K."/>
            <person name="Detter J.C."/>
            <person name="Glavina del Rio T."/>
            <person name="Hammon N."/>
            <person name="Israni S."/>
            <person name="Pitluck S."/>
            <person name="Chain P."/>
            <person name="Malfatti S."/>
            <person name="Shin M."/>
            <person name="Vergez L."/>
            <person name="Schmutz J."/>
            <person name="Larimer F."/>
            <person name="Land M."/>
            <person name="Hauser L."/>
            <person name="Kyrpides N."/>
            <person name="Kim E."/>
            <person name="LiPuma J.J."/>
            <person name="Gonzalez C.F."/>
            <person name="Konstantinidis K."/>
            <person name="Tiedje J.M."/>
            <person name="Richardson P."/>
        </authorList>
    </citation>
    <scope>NUCLEOTIDE SEQUENCE [LARGE SCALE GENOMIC DNA]</scope>
    <source>
        <strain>HI2424</strain>
    </source>
</reference>
<accession>A0KE25</accession>
<proteinExistence type="inferred from homology"/>
<sequence length="514" mass="56442">MAMPRNLPGQAAHDEADQEILRLDGIRKRFPGVLALDGIRLDLRRGEVHAVCGENGAGKSTLMKIISGQYLPDEGAVHYRGAPVRFRSASEAQAAGISIIHQELNLVPHLSVAENLFLAREPRRGPFVDTKRMNAEAARCIARIGLNVAPTTKVGVLSIAQQQMVEIAKALSHDARVLIMDEPTSSLTEAETVQLFRIIEELRADGVAILYISHRLDEMAQIVDRVTVLRDGRHISTDDFADVSIDDIVARMVGRTLDDAYPSRQSVPTDDVLLDVRDLRRDGVFGPVSFALRRGEILGFAGLMGAGRTEIARAIFGADRPDGGTIALHGRPVTIRSPREAIRHGIAYLSEDRKKEGLALPMPVAANLTLANVRGIASRFGFLRFDDEIDVARRYVQDLAIRTPSVHQRVRNLSGGNQQKVVIGKWLYRGSKILFFDEPTRGIDVGAKFAIYGLMDRLAADGVGVVLISSELPELLGMTDRIAVFHEGRMTAILDTKHTSQEEIMHYASGRSHA</sequence>
<keyword id="KW-0067">ATP-binding</keyword>
<keyword id="KW-0997">Cell inner membrane</keyword>
<keyword id="KW-1003">Cell membrane</keyword>
<keyword id="KW-0472">Membrane</keyword>
<keyword id="KW-0547">Nucleotide-binding</keyword>
<keyword id="KW-0677">Repeat</keyword>
<keyword id="KW-0762">Sugar transport</keyword>
<keyword id="KW-1278">Translocase</keyword>
<keyword id="KW-0813">Transport</keyword>
<feature type="chain" id="PRO_0000277555" description="Putative ribose/galactose/methyl galactoside import ATP-binding protein 3">
    <location>
        <begin position="1"/>
        <end position="514"/>
    </location>
</feature>
<feature type="domain" description="ABC transporter 1" evidence="1">
    <location>
        <begin position="21"/>
        <end position="256"/>
    </location>
</feature>
<feature type="domain" description="ABC transporter 2" evidence="1">
    <location>
        <begin position="267"/>
        <end position="512"/>
    </location>
</feature>
<feature type="binding site" evidence="1">
    <location>
        <begin position="53"/>
        <end position="60"/>
    </location>
    <ligand>
        <name>ATP</name>
        <dbReference type="ChEBI" id="CHEBI:30616"/>
    </ligand>
</feature>
<organism>
    <name type="scientific">Burkholderia cenocepacia (strain HI2424)</name>
    <dbReference type="NCBI Taxonomy" id="331272"/>
    <lineage>
        <taxon>Bacteria</taxon>
        <taxon>Pseudomonadati</taxon>
        <taxon>Pseudomonadota</taxon>
        <taxon>Betaproteobacteria</taxon>
        <taxon>Burkholderiales</taxon>
        <taxon>Burkholderiaceae</taxon>
        <taxon>Burkholderia</taxon>
        <taxon>Burkholderia cepacia complex</taxon>
    </lineage>
</organism>
<gene>
    <name type="ordered locus">Bcen2424_6709</name>
</gene>
<name>RGMG3_BURCH</name>
<evidence type="ECO:0000255" key="1">
    <source>
        <dbReference type="HAMAP-Rule" id="MF_01717"/>
    </source>
</evidence>
<dbReference type="EC" id="7.5.2.11" evidence="1"/>
<dbReference type="EC" id="7.5.2.7" evidence="1"/>
<dbReference type="EMBL" id="CP000460">
    <property type="protein sequence ID" value="ABK13438.1"/>
    <property type="molecule type" value="Genomic_DNA"/>
</dbReference>
<dbReference type="RefSeq" id="WP_011549868.1">
    <property type="nucleotide sequence ID" value="NC_008544.1"/>
</dbReference>
<dbReference type="SMR" id="A0KE25"/>
<dbReference type="KEGG" id="bch:Bcen2424_6709"/>
<dbReference type="HOGENOM" id="CLU_000604_92_3_4"/>
<dbReference type="GO" id="GO:0005886">
    <property type="term" value="C:plasma membrane"/>
    <property type="evidence" value="ECO:0007669"/>
    <property type="project" value="UniProtKB-SubCell"/>
</dbReference>
<dbReference type="GO" id="GO:0015611">
    <property type="term" value="F:ABC-type D-ribose transporter activity"/>
    <property type="evidence" value="ECO:0007669"/>
    <property type="project" value="UniProtKB-EC"/>
</dbReference>
<dbReference type="GO" id="GO:0005524">
    <property type="term" value="F:ATP binding"/>
    <property type="evidence" value="ECO:0007669"/>
    <property type="project" value="UniProtKB-KW"/>
</dbReference>
<dbReference type="GO" id="GO:0016887">
    <property type="term" value="F:ATP hydrolysis activity"/>
    <property type="evidence" value="ECO:0007669"/>
    <property type="project" value="InterPro"/>
</dbReference>
<dbReference type="CDD" id="cd03216">
    <property type="entry name" value="ABC_Carb_Monos_I"/>
    <property type="match status" value="1"/>
</dbReference>
<dbReference type="CDD" id="cd03215">
    <property type="entry name" value="ABC_Carb_Monos_II"/>
    <property type="match status" value="1"/>
</dbReference>
<dbReference type="FunFam" id="3.40.50.300:FF:000127">
    <property type="entry name" value="Ribose import ATP-binding protein RbsA"/>
    <property type="match status" value="1"/>
</dbReference>
<dbReference type="Gene3D" id="3.40.50.300">
    <property type="entry name" value="P-loop containing nucleotide triphosphate hydrolases"/>
    <property type="match status" value="2"/>
</dbReference>
<dbReference type="InterPro" id="IPR003593">
    <property type="entry name" value="AAA+_ATPase"/>
</dbReference>
<dbReference type="InterPro" id="IPR050107">
    <property type="entry name" value="ABC_carbohydrate_import_ATPase"/>
</dbReference>
<dbReference type="InterPro" id="IPR003439">
    <property type="entry name" value="ABC_transporter-like_ATP-bd"/>
</dbReference>
<dbReference type="InterPro" id="IPR017871">
    <property type="entry name" value="ABC_transporter-like_CS"/>
</dbReference>
<dbReference type="InterPro" id="IPR027417">
    <property type="entry name" value="P-loop_NTPase"/>
</dbReference>
<dbReference type="PANTHER" id="PTHR43790">
    <property type="entry name" value="CARBOHYDRATE TRANSPORT ATP-BINDING PROTEIN MG119-RELATED"/>
    <property type="match status" value="1"/>
</dbReference>
<dbReference type="PANTHER" id="PTHR43790:SF3">
    <property type="entry name" value="D-ALLOSE IMPORT ATP-BINDING PROTEIN ALSA-RELATED"/>
    <property type="match status" value="1"/>
</dbReference>
<dbReference type="Pfam" id="PF00005">
    <property type="entry name" value="ABC_tran"/>
    <property type="match status" value="2"/>
</dbReference>
<dbReference type="SMART" id="SM00382">
    <property type="entry name" value="AAA"/>
    <property type="match status" value="2"/>
</dbReference>
<dbReference type="SUPFAM" id="SSF52540">
    <property type="entry name" value="P-loop containing nucleoside triphosphate hydrolases"/>
    <property type="match status" value="2"/>
</dbReference>
<dbReference type="PROSITE" id="PS00211">
    <property type="entry name" value="ABC_TRANSPORTER_1"/>
    <property type="match status" value="1"/>
</dbReference>
<dbReference type="PROSITE" id="PS50893">
    <property type="entry name" value="ABC_TRANSPORTER_2"/>
    <property type="match status" value="2"/>
</dbReference>
<dbReference type="PROSITE" id="PS51260">
    <property type="entry name" value="MGLA"/>
    <property type="match status" value="1"/>
</dbReference>
<dbReference type="PROSITE" id="PS51254">
    <property type="entry name" value="RBSA"/>
    <property type="match status" value="1"/>
</dbReference>
<protein>
    <recommendedName>
        <fullName evidence="1">Putative ribose/galactose/methyl galactoside import ATP-binding protein 3</fullName>
        <ecNumber evidence="1">7.5.2.11</ecNumber>
        <ecNumber evidence="1">7.5.2.7</ecNumber>
    </recommendedName>
</protein>